<sequence>MPSLTSLFSFFALASGAFSATADLSKRESYTSSSTGTSNGYYYSFWTDGQGDITYSNGAAGEYSVTWSGDGNFVAGKGWNPGGSREVTFKGSYNPNGNSYLSVYGWTQNPLIEFYIVEDFGTYNPSSGATKKGTVTSDGSVYDIYTSERVNQPSIEGTATFTQYWSVRQNKRSEGTVTTGNHFNAWKNLGMDLGSFNYMIVATEGYYSSGSADITVS</sequence>
<evidence type="ECO:0000250" key="1"/>
<evidence type="ECO:0000255" key="2">
    <source>
        <dbReference type="PROSITE-ProRule" id="PRU01097"/>
    </source>
</evidence>
<evidence type="ECO:0000255" key="3">
    <source>
        <dbReference type="PROSITE-ProRule" id="PRU10062"/>
    </source>
</evidence>
<evidence type="ECO:0000269" key="4">
    <source>
    </source>
</evidence>
<evidence type="ECO:0000305" key="5"/>
<reference key="1">
    <citation type="journal article" date="2005" name="J. Biosci. Bioeng.">
        <title>Purification and properties of an extracellular endo-1,4-beta-xylanase from Penicillium citrinum and characterization of the encoding gene.</title>
        <authorList>
            <person name="Tanaka H."/>
            <person name="Nakamura T."/>
            <person name="Hayashi S."/>
            <person name="Ohta K."/>
        </authorList>
    </citation>
    <scope>NUCLEOTIDE SEQUENCE [GENOMIC DNA]</scope>
    <scope>PROTEIN SEQUENCE OF 28-42 AND 114-123</scope>
    <scope>SUBCELLULAR LOCATION</scope>
    <scope>FUNCTION</scope>
    <scope>CATALYTIC ACTIVITY</scope>
    <scope>BIOPHYSICOCHEMICAL PROPERTIES</scope>
    <source>
        <strain>FERM P-15944</strain>
    </source>
</reference>
<proteinExistence type="evidence at protein level"/>
<dbReference type="EC" id="3.2.1.8"/>
<dbReference type="EMBL" id="AB198065">
    <property type="protein sequence ID" value="BAE71133.1"/>
    <property type="molecule type" value="Genomic_DNA"/>
</dbReference>
<dbReference type="SMR" id="Q2PGY1"/>
<dbReference type="CAZy" id="GH11">
    <property type="family name" value="Glycoside Hydrolase Family 11"/>
</dbReference>
<dbReference type="OrthoDB" id="2115822at2759"/>
<dbReference type="BRENDA" id="3.2.1.8">
    <property type="organism ID" value="4608"/>
</dbReference>
<dbReference type="UniPathway" id="UPA00114"/>
<dbReference type="GO" id="GO:0005576">
    <property type="term" value="C:extracellular region"/>
    <property type="evidence" value="ECO:0007669"/>
    <property type="project" value="UniProtKB-SubCell"/>
</dbReference>
<dbReference type="GO" id="GO:0031176">
    <property type="term" value="F:endo-1,4-beta-xylanase activity"/>
    <property type="evidence" value="ECO:0007669"/>
    <property type="project" value="UniProtKB-EC"/>
</dbReference>
<dbReference type="GO" id="GO:0045493">
    <property type="term" value="P:xylan catabolic process"/>
    <property type="evidence" value="ECO:0007669"/>
    <property type="project" value="UniProtKB-UniPathway"/>
</dbReference>
<dbReference type="FunFam" id="2.60.120.180:FF:000001">
    <property type="entry name" value="Endo-1,4-beta-xylanase"/>
    <property type="match status" value="1"/>
</dbReference>
<dbReference type="Gene3D" id="2.60.120.180">
    <property type="match status" value="1"/>
</dbReference>
<dbReference type="InterPro" id="IPR013320">
    <property type="entry name" value="ConA-like_dom_sf"/>
</dbReference>
<dbReference type="InterPro" id="IPR013319">
    <property type="entry name" value="GH11/12"/>
</dbReference>
<dbReference type="InterPro" id="IPR018208">
    <property type="entry name" value="GH11_AS_1"/>
</dbReference>
<dbReference type="InterPro" id="IPR033123">
    <property type="entry name" value="GH11_dom"/>
</dbReference>
<dbReference type="InterPro" id="IPR001137">
    <property type="entry name" value="Glyco_hydro_11"/>
</dbReference>
<dbReference type="PANTHER" id="PTHR46828">
    <property type="entry name" value="ENDO-1,4-BETA-XYLANASE A-RELATED"/>
    <property type="match status" value="1"/>
</dbReference>
<dbReference type="PANTHER" id="PTHR46828:SF2">
    <property type="entry name" value="ENDO-1,4-BETA-XYLANASE A-RELATED"/>
    <property type="match status" value="1"/>
</dbReference>
<dbReference type="Pfam" id="PF00457">
    <property type="entry name" value="Glyco_hydro_11"/>
    <property type="match status" value="1"/>
</dbReference>
<dbReference type="PRINTS" id="PR00911">
    <property type="entry name" value="GLHYDRLASE11"/>
</dbReference>
<dbReference type="SUPFAM" id="SSF49899">
    <property type="entry name" value="Concanavalin A-like lectins/glucanases"/>
    <property type="match status" value="1"/>
</dbReference>
<dbReference type="PROSITE" id="PS00776">
    <property type="entry name" value="GH11_1"/>
    <property type="match status" value="1"/>
</dbReference>
<dbReference type="PROSITE" id="PS51761">
    <property type="entry name" value="GH11_3"/>
    <property type="match status" value="1"/>
</dbReference>
<accession>Q2PGY1</accession>
<gene>
    <name type="primary">xynA</name>
</gene>
<feature type="signal peptide" evidence="4">
    <location>
        <begin position="1"/>
        <end position="27"/>
    </location>
</feature>
<feature type="chain" id="PRO_5000052207" description="Endo-1,4-beta-xylanase A">
    <location>
        <begin position="28"/>
        <end position="217"/>
    </location>
</feature>
<feature type="domain" description="GH11" evidence="2">
    <location>
        <begin position="29"/>
        <end position="217"/>
    </location>
</feature>
<feature type="active site" description="Nucleophile" evidence="3">
    <location>
        <position position="113"/>
    </location>
</feature>
<feature type="active site" description="Proton donor" evidence="1">
    <location>
        <position position="204"/>
    </location>
</feature>
<comment type="function">
    <text evidence="4">Endo-1,4-beta-xylanase involved in the hydrolysis of xylan, a major structural heterogeneous polysaccharide found in plant biomass representing the second most abundant polysaccharide in the biosphere, after cellulose.</text>
</comment>
<comment type="catalytic activity">
    <reaction evidence="4">
        <text>Endohydrolysis of (1-&gt;4)-beta-D-xylosidic linkages in xylans.</text>
        <dbReference type="EC" id="3.2.1.8"/>
    </reaction>
</comment>
<comment type="biophysicochemical properties">
    <phDependence>
        <text evidence="4">Optimum pH is 5.0.</text>
    </phDependence>
    <temperatureDependence>
        <text evidence="4">Optimum temperature is 55 degrees Celsius.</text>
    </temperatureDependence>
</comment>
<comment type="pathway">
    <text>Glycan degradation; xylan degradation.</text>
</comment>
<comment type="subcellular location">
    <subcellularLocation>
        <location evidence="4">Secreted</location>
    </subcellularLocation>
</comment>
<comment type="similarity">
    <text evidence="5">Belongs to the glycosyl hydrolase 11 (cellulase G) family.</text>
</comment>
<keyword id="KW-0119">Carbohydrate metabolism</keyword>
<keyword id="KW-0903">Direct protein sequencing</keyword>
<keyword id="KW-0326">Glycosidase</keyword>
<keyword id="KW-0378">Hydrolase</keyword>
<keyword id="KW-0624">Polysaccharide degradation</keyword>
<keyword id="KW-0964">Secreted</keyword>
<keyword id="KW-0732">Signal</keyword>
<keyword id="KW-0858">Xylan degradation</keyword>
<name>XYNA_PENCI</name>
<protein>
    <recommendedName>
        <fullName>Endo-1,4-beta-xylanase A</fullName>
        <shortName>Xylanase A</shortName>
        <ecNumber>3.2.1.8</ecNumber>
    </recommendedName>
    <alternativeName>
        <fullName>1,4-beta-D-xylan xylanohydrolase A</fullName>
    </alternativeName>
</protein>
<organism>
    <name type="scientific">Penicillium citrinum</name>
    <dbReference type="NCBI Taxonomy" id="5077"/>
    <lineage>
        <taxon>Eukaryota</taxon>
        <taxon>Fungi</taxon>
        <taxon>Dikarya</taxon>
        <taxon>Ascomycota</taxon>
        <taxon>Pezizomycotina</taxon>
        <taxon>Eurotiomycetes</taxon>
        <taxon>Eurotiomycetidae</taxon>
        <taxon>Eurotiales</taxon>
        <taxon>Aspergillaceae</taxon>
        <taxon>Penicillium</taxon>
    </lineage>
</organism>